<protein>
    <recommendedName>
        <fullName evidence="1">4-hydroxy-3-methylbut-2-enyl diphosphate reductase</fullName>
        <shortName evidence="1">HMBPP reductase</shortName>
        <ecNumber evidence="1">1.17.7.4</ecNumber>
    </recommendedName>
</protein>
<gene>
    <name evidence="1" type="primary">ispH</name>
    <name type="ordered locus">Lferr_2858</name>
</gene>
<name>ISPH_ACIF5</name>
<dbReference type="EC" id="1.17.7.4" evidence="1"/>
<dbReference type="EMBL" id="CP001132">
    <property type="protein sequence ID" value="ACH85043.1"/>
    <property type="molecule type" value="Genomic_DNA"/>
</dbReference>
<dbReference type="RefSeq" id="WP_009566635.1">
    <property type="nucleotide sequence ID" value="NC_011206.1"/>
</dbReference>
<dbReference type="SMR" id="B5ERJ7"/>
<dbReference type="GeneID" id="65282237"/>
<dbReference type="KEGG" id="afe:Lferr_2858"/>
<dbReference type="eggNOG" id="COG0761">
    <property type="taxonomic scope" value="Bacteria"/>
</dbReference>
<dbReference type="HOGENOM" id="CLU_027486_1_1_6"/>
<dbReference type="UniPathway" id="UPA00056">
    <property type="reaction ID" value="UER00097"/>
</dbReference>
<dbReference type="UniPathway" id="UPA00059">
    <property type="reaction ID" value="UER00105"/>
</dbReference>
<dbReference type="GO" id="GO:0051539">
    <property type="term" value="F:4 iron, 4 sulfur cluster binding"/>
    <property type="evidence" value="ECO:0007669"/>
    <property type="project" value="UniProtKB-UniRule"/>
</dbReference>
<dbReference type="GO" id="GO:0051745">
    <property type="term" value="F:4-hydroxy-3-methylbut-2-enyl diphosphate reductase activity"/>
    <property type="evidence" value="ECO:0007669"/>
    <property type="project" value="UniProtKB-UniRule"/>
</dbReference>
<dbReference type="GO" id="GO:0046872">
    <property type="term" value="F:metal ion binding"/>
    <property type="evidence" value="ECO:0007669"/>
    <property type="project" value="UniProtKB-KW"/>
</dbReference>
<dbReference type="GO" id="GO:0050992">
    <property type="term" value="P:dimethylallyl diphosphate biosynthetic process"/>
    <property type="evidence" value="ECO:0007669"/>
    <property type="project" value="UniProtKB-UniRule"/>
</dbReference>
<dbReference type="GO" id="GO:0019288">
    <property type="term" value="P:isopentenyl diphosphate biosynthetic process, methylerythritol 4-phosphate pathway"/>
    <property type="evidence" value="ECO:0007669"/>
    <property type="project" value="UniProtKB-UniRule"/>
</dbReference>
<dbReference type="GO" id="GO:0016114">
    <property type="term" value="P:terpenoid biosynthetic process"/>
    <property type="evidence" value="ECO:0007669"/>
    <property type="project" value="UniProtKB-UniRule"/>
</dbReference>
<dbReference type="CDD" id="cd13944">
    <property type="entry name" value="lytB_ispH"/>
    <property type="match status" value="1"/>
</dbReference>
<dbReference type="Gene3D" id="3.40.50.11270">
    <property type="match status" value="1"/>
</dbReference>
<dbReference type="Gene3D" id="3.40.1010.20">
    <property type="entry name" value="4-hydroxy-3-methylbut-2-enyl diphosphate reductase, catalytic domain"/>
    <property type="match status" value="2"/>
</dbReference>
<dbReference type="HAMAP" id="MF_00191">
    <property type="entry name" value="IspH"/>
    <property type="match status" value="1"/>
</dbReference>
<dbReference type="InterPro" id="IPR003451">
    <property type="entry name" value="LytB/IspH"/>
</dbReference>
<dbReference type="NCBIfam" id="TIGR00216">
    <property type="entry name" value="ispH_lytB"/>
    <property type="match status" value="1"/>
</dbReference>
<dbReference type="NCBIfam" id="NF002188">
    <property type="entry name" value="PRK01045.1-2"/>
    <property type="match status" value="1"/>
</dbReference>
<dbReference type="NCBIfam" id="NF002190">
    <property type="entry name" value="PRK01045.1-4"/>
    <property type="match status" value="1"/>
</dbReference>
<dbReference type="PANTHER" id="PTHR30426">
    <property type="entry name" value="4-HYDROXY-3-METHYLBUT-2-ENYL DIPHOSPHATE REDUCTASE"/>
    <property type="match status" value="1"/>
</dbReference>
<dbReference type="PANTHER" id="PTHR30426:SF0">
    <property type="entry name" value="4-HYDROXY-3-METHYLBUT-2-ENYL DIPHOSPHATE REDUCTASE"/>
    <property type="match status" value="1"/>
</dbReference>
<dbReference type="Pfam" id="PF02401">
    <property type="entry name" value="LYTB"/>
    <property type="match status" value="1"/>
</dbReference>
<keyword id="KW-0004">4Fe-4S</keyword>
<keyword id="KW-0408">Iron</keyword>
<keyword id="KW-0411">Iron-sulfur</keyword>
<keyword id="KW-0414">Isoprene biosynthesis</keyword>
<keyword id="KW-0479">Metal-binding</keyword>
<keyword id="KW-0560">Oxidoreductase</keyword>
<feature type="chain" id="PRO_1000098927" description="4-hydroxy-3-methylbut-2-enyl diphosphate reductase">
    <location>
        <begin position="1"/>
        <end position="316"/>
    </location>
</feature>
<feature type="active site" description="Proton donor" evidence="1">
    <location>
        <position position="126"/>
    </location>
</feature>
<feature type="binding site" evidence="1">
    <location>
        <position position="12"/>
    </location>
    <ligand>
        <name>[4Fe-4S] cluster</name>
        <dbReference type="ChEBI" id="CHEBI:49883"/>
    </ligand>
</feature>
<feature type="binding site" evidence="1">
    <location>
        <position position="41"/>
    </location>
    <ligand>
        <name>(2E)-4-hydroxy-3-methylbut-2-enyl diphosphate</name>
        <dbReference type="ChEBI" id="CHEBI:128753"/>
    </ligand>
</feature>
<feature type="binding site" evidence="1">
    <location>
        <position position="41"/>
    </location>
    <ligand>
        <name>dimethylallyl diphosphate</name>
        <dbReference type="ChEBI" id="CHEBI:57623"/>
    </ligand>
</feature>
<feature type="binding site" evidence="1">
    <location>
        <position position="41"/>
    </location>
    <ligand>
        <name>isopentenyl diphosphate</name>
        <dbReference type="ChEBI" id="CHEBI:128769"/>
    </ligand>
</feature>
<feature type="binding site" evidence="1">
    <location>
        <position position="74"/>
    </location>
    <ligand>
        <name>(2E)-4-hydroxy-3-methylbut-2-enyl diphosphate</name>
        <dbReference type="ChEBI" id="CHEBI:128753"/>
    </ligand>
</feature>
<feature type="binding site" evidence="1">
    <location>
        <position position="74"/>
    </location>
    <ligand>
        <name>dimethylallyl diphosphate</name>
        <dbReference type="ChEBI" id="CHEBI:57623"/>
    </ligand>
</feature>
<feature type="binding site" evidence="1">
    <location>
        <position position="74"/>
    </location>
    <ligand>
        <name>isopentenyl diphosphate</name>
        <dbReference type="ChEBI" id="CHEBI:128769"/>
    </ligand>
</feature>
<feature type="binding site" evidence="1">
    <location>
        <position position="96"/>
    </location>
    <ligand>
        <name>[4Fe-4S] cluster</name>
        <dbReference type="ChEBI" id="CHEBI:49883"/>
    </ligand>
</feature>
<feature type="binding site" evidence="1">
    <location>
        <position position="124"/>
    </location>
    <ligand>
        <name>(2E)-4-hydroxy-3-methylbut-2-enyl diphosphate</name>
        <dbReference type="ChEBI" id="CHEBI:128753"/>
    </ligand>
</feature>
<feature type="binding site" evidence="1">
    <location>
        <position position="124"/>
    </location>
    <ligand>
        <name>dimethylallyl diphosphate</name>
        <dbReference type="ChEBI" id="CHEBI:57623"/>
    </ligand>
</feature>
<feature type="binding site" evidence="1">
    <location>
        <position position="124"/>
    </location>
    <ligand>
        <name>isopentenyl diphosphate</name>
        <dbReference type="ChEBI" id="CHEBI:128769"/>
    </ligand>
</feature>
<feature type="binding site" evidence="1">
    <location>
        <position position="165"/>
    </location>
    <ligand>
        <name>(2E)-4-hydroxy-3-methylbut-2-enyl diphosphate</name>
        <dbReference type="ChEBI" id="CHEBI:128753"/>
    </ligand>
</feature>
<feature type="binding site" evidence="1">
    <location>
        <position position="195"/>
    </location>
    <ligand>
        <name>[4Fe-4S] cluster</name>
        <dbReference type="ChEBI" id="CHEBI:49883"/>
    </ligand>
</feature>
<feature type="binding site" evidence="1">
    <location>
        <position position="223"/>
    </location>
    <ligand>
        <name>(2E)-4-hydroxy-3-methylbut-2-enyl diphosphate</name>
        <dbReference type="ChEBI" id="CHEBI:128753"/>
    </ligand>
</feature>
<feature type="binding site" evidence="1">
    <location>
        <position position="223"/>
    </location>
    <ligand>
        <name>dimethylallyl diphosphate</name>
        <dbReference type="ChEBI" id="CHEBI:57623"/>
    </ligand>
</feature>
<feature type="binding site" evidence="1">
    <location>
        <position position="223"/>
    </location>
    <ligand>
        <name>isopentenyl diphosphate</name>
        <dbReference type="ChEBI" id="CHEBI:128769"/>
    </ligand>
</feature>
<feature type="binding site" evidence="1">
    <location>
        <position position="224"/>
    </location>
    <ligand>
        <name>(2E)-4-hydroxy-3-methylbut-2-enyl diphosphate</name>
        <dbReference type="ChEBI" id="CHEBI:128753"/>
    </ligand>
</feature>
<feature type="binding site" evidence="1">
    <location>
        <position position="224"/>
    </location>
    <ligand>
        <name>dimethylallyl diphosphate</name>
        <dbReference type="ChEBI" id="CHEBI:57623"/>
    </ligand>
</feature>
<feature type="binding site" evidence="1">
    <location>
        <position position="224"/>
    </location>
    <ligand>
        <name>isopentenyl diphosphate</name>
        <dbReference type="ChEBI" id="CHEBI:128769"/>
    </ligand>
</feature>
<feature type="binding site" evidence="1">
    <location>
        <position position="225"/>
    </location>
    <ligand>
        <name>(2E)-4-hydroxy-3-methylbut-2-enyl diphosphate</name>
        <dbReference type="ChEBI" id="CHEBI:128753"/>
    </ligand>
</feature>
<feature type="binding site" evidence="1">
    <location>
        <position position="225"/>
    </location>
    <ligand>
        <name>dimethylallyl diphosphate</name>
        <dbReference type="ChEBI" id="CHEBI:57623"/>
    </ligand>
</feature>
<feature type="binding site" evidence="1">
    <location>
        <position position="225"/>
    </location>
    <ligand>
        <name>isopentenyl diphosphate</name>
        <dbReference type="ChEBI" id="CHEBI:128769"/>
    </ligand>
</feature>
<feature type="binding site" evidence="1">
    <location>
        <position position="267"/>
    </location>
    <ligand>
        <name>(2E)-4-hydroxy-3-methylbut-2-enyl diphosphate</name>
        <dbReference type="ChEBI" id="CHEBI:128753"/>
    </ligand>
</feature>
<feature type="binding site" evidence="1">
    <location>
        <position position="267"/>
    </location>
    <ligand>
        <name>dimethylallyl diphosphate</name>
        <dbReference type="ChEBI" id="CHEBI:57623"/>
    </ligand>
</feature>
<feature type="binding site" evidence="1">
    <location>
        <position position="267"/>
    </location>
    <ligand>
        <name>isopentenyl diphosphate</name>
        <dbReference type="ChEBI" id="CHEBI:128769"/>
    </ligand>
</feature>
<organism>
    <name type="scientific">Acidithiobacillus ferrooxidans (strain ATCC 53993 / BNL-5-31)</name>
    <name type="common">Leptospirillum ferrooxidans (ATCC 53993)</name>
    <dbReference type="NCBI Taxonomy" id="380394"/>
    <lineage>
        <taxon>Bacteria</taxon>
        <taxon>Pseudomonadati</taxon>
        <taxon>Pseudomonadota</taxon>
        <taxon>Acidithiobacillia</taxon>
        <taxon>Acidithiobacillales</taxon>
        <taxon>Acidithiobacillaceae</taxon>
        <taxon>Acidithiobacillus</taxon>
    </lineage>
</organism>
<sequence>MDILLANPRGFCAGVNRAIQIVDRALELFGAPIYVRHEVVHNRHVVEDLRARGAIFVEELDEVPDAATVIFSAHGVPIAVREHAAARGLSVFDATCPLVTKVHMEVKKYSRDGMEMVLIGHAGHPEVEGTMGQVEEGMMYLVSNVSDVATLAPRNPDKLAYITQTTLSMDDTAEVIVALRSRFPLIEGPKKDDICYATQNRQDAVKSLAPDVDILLVVGAPNSSNSSRLAELGTRLGTQTHLIEDAQQLRREWFEGVGKIGISAGASAPESLVQEIMDTLRGWGARVPQEMPGVEEKVTFSLPLALIQAQTRREGA</sequence>
<accession>B5ERJ7</accession>
<evidence type="ECO:0000255" key="1">
    <source>
        <dbReference type="HAMAP-Rule" id="MF_00191"/>
    </source>
</evidence>
<comment type="function">
    <text evidence="1">Catalyzes the conversion of 1-hydroxy-2-methyl-2-(E)-butenyl 4-diphosphate (HMBPP) into a mixture of isopentenyl diphosphate (IPP) and dimethylallyl diphosphate (DMAPP). Acts in the terminal step of the DOXP/MEP pathway for isoprenoid precursor biosynthesis.</text>
</comment>
<comment type="catalytic activity">
    <reaction evidence="1">
        <text>isopentenyl diphosphate + 2 oxidized [2Fe-2S]-[ferredoxin] + H2O = (2E)-4-hydroxy-3-methylbut-2-enyl diphosphate + 2 reduced [2Fe-2S]-[ferredoxin] + 2 H(+)</text>
        <dbReference type="Rhea" id="RHEA:24488"/>
        <dbReference type="Rhea" id="RHEA-COMP:10000"/>
        <dbReference type="Rhea" id="RHEA-COMP:10001"/>
        <dbReference type="ChEBI" id="CHEBI:15377"/>
        <dbReference type="ChEBI" id="CHEBI:15378"/>
        <dbReference type="ChEBI" id="CHEBI:33737"/>
        <dbReference type="ChEBI" id="CHEBI:33738"/>
        <dbReference type="ChEBI" id="CHEBI:128753"/>
        <dbReference type="ChEBI" id="CHEBI:128769"/>
        <dbReference type="EC" id="1.17.7.4"/>
    </reaction>
</comment>
<comment type="catalytic activity">
    <reaction evidence="1">
        <text>dimethylallyl diphosphate + 2 oxidized [2Fe-2S]-[ferredoxin] + H2O = (2E)-4-hydroxy-3-methylbut-2-enyl diphosphate + 2 reduced [2Fe-2S]-[ferredoxin] + 2 H(+)</text>
        <dbReference type="Rhea" id="RHEA:24825"/>
        <dbReference type="Rhea" id="RHEA-COMP:10000"/>
        <dbReference type="Rhea" id="RHEA-COMP:10001"/>
        <dbReference type="ChEBI" id="CHEBI:15377"/>
        <dbReference type="ChEBI" id="CHEBI:15378"/>
        <dbReference type="ChEBI" id="CHEBI:33737"/>
        <dbReference type="ChEBI" id="CHEBI:33738"/>
        <dbReference type="ChEBI" id="CHEBI:57623"/>
        <dbReference type="ChEBI" id="CHEBI:128753"/>
        <dbReference type="EC" id="1.17.7.4"/>
    </reaction>
</comment>
<comment type="cofactor">
    <cofactor evidence="1">
        <name>[4Fe-4S] cluster</name>
        <dbReference type="ChEBI" id="CHEBI:49883"/>
    </cofactor>
    <text evidence="1">Binds 1 [4Fe-4S] cluster per subunit.</text>
</comment>
<comment type="pathway">
    <text evidence="1">Isoprenoid biosynthesis; dimethylallyl diphosphate biosynthesis; dimethylallyl diphosphate from (2E)-4-hydroxy-3-methylbutenyl diphosphate: step 1/1.</text>
</comment>
<comment type="pathway">
    <text evidence="1">Isoprenoid biosynthesis; isopentenyl diphosphate biosynthesis via DXP pathway; isopentenyl diphosphate from 1-deoxy-D-xylulose 5-phosphate: step 6/6.</text>
</comment>
<comment type="similarity">
    <text evidence="1">Belongs to the IspH family.</text>
</comment>
<proteinExistence type="inferred from homology"/>
<reference key="1">
    <citation type="submission" date="2008-08" db="EMBL/GenBank/DDBJ databases">
        <title>Complete sequence of Acidithiobacillus ferrooxidans ATCC 53993.</title>
        <authorList>
            <person name="Lucas S."/>
            <person name="Copeland A."/>
            <person name="Lapidus A."/>
            <person name="Glavina del Rio T."/>
            <person name="Dalin E."/>
            <person name="Tice H."/>
            <person name="Bruce D."/>
            <person name="Goodwin L."/>
            <person name="Pitluck S."/>
            <person name="Sims D."/>
            <person name="Brettin T."/>
            <person name="Detter J.C."/>
            <person name="Han C."/>
            <person name="Kuske C.R."/>
            <person name="Larimer F."/>
            <person name="Land M."/>
            <person name="Hauser L."/>
            <person name="Kyrpides N."/>
            <person name="Lykidis A."/>
            <person name="Borole A.P."/>
        </authorList>
    </citation>
    <scope>NUCLEOTIDE SEQUENCE [LARGE SCALE GENOMIC DNA]</scope>
    <source>
        <strain>ATCC 53993 / BNL-5-31</strain>
    </source>
</reference>